<accession>Q5XIU9</accession>
<comment type="function">
    <text evidence="3">Required for the maintenance of uterine histoarchitecture and normal female reproductive lifespan. May serve as a universal non-classical progesterone receptor in the uterus. Intracellular heme chaperone required for delivery of labile, or signaling heme, to the nucleus. Plays a role in adipocyte function and systemic glucose homeostasis. In brown fat, which has a high demand for heme, delivery of labile heme in the nucleus regulates the activity of heme-responsive transcriptional repressors such as NR1D1 and BACH1.</text>
</comment>
<comment type="subunit">
    <text evidence="2 3">Interacts with PGRMC1 (By similarity). Interacts with AAAS (By similarity).</text>
</comment>
<comment type="subcellular location">
    <subcellularLocation>
        <location evidence="3">Membrane</location>
        <topology evidence="3">Single-pass membrane protein</topology>
    </subcellularLocation>
    <subcellularLocation>
        <location evidence="2">Nucleus envelope</location>
    </subcellularLocation>
    <subcellularLocation>
        <location evidence="2">Endoplasmic reticulum</location>
    </subcellularLocation>
    <subcellularLocation>
        <location evidence="2">Secreted</location>
    </subcellularLocation>
</comment>
<comment type="domain">
    <text evidence="1">The cytochrome b5 heme-binding domain lacks the conserved iron-binding His residues at positions 131 and 155.</text>
</comment>
<comment type="miscellaneous">
    <text evidence="2">Non-classical progesterone receptors involved in extranuclear signaling are classified in 2 groups: the class II progestin and adipoQ receptor (PAQR) family (also called mPRs) (PAQR5, PAQR6, PAQR7, PAQR8 and PAQR9) and the b5-like heme/steroid-binding protein family (also called MAPRs) (PGRMC1, PGRMC2, NENF and CYB5D2).</text>
</comment>
<comment type="similarity">
    <text evidence="6">Belongs to the cytochrome b5 family. MAPR subfamily.</text>
</comment>
<gene>
    <name evidence="7" type="primary">Pgrmc2</name>
</gene>
<proteinExistence type="evidence at protein level"/>
<feature type="chain" id="PRO_0000121745" description="Membrane-associated progesterone receptor component 2">
    <location>
        <begin position="1"/>
        <end position="217"/>
    </location>
</feature>
<feature type="transmembrane region" description="Helical" evidence="4">
    <location>
        <begin position="40"/>
        <end position="62"/>
    </location>
</feature>
<feature type="domain" description="Cytochrome b5 heme-binding">
    <location>
        <begin position="96"/>
        <end position="195"/>
    </location>
</feature>
<feature type="region of interest" description="Disordered" evidence="5">
    <location>
        <begin position="196"/>
        <end position="217"/>
    </location>
</feature>
<feature type="compositionally biased region" description="Acidic residues" evidence="5">
    <location>
        <begin position="200"/>
        <end position="209"/>
    </location>
</feature>
<feature type="modified residue" description="Phosphoserine" evidence="2">
    <location>
        <position position="84"/>
    </location>
</feature>
<feature type="modified residue" description="Phosphoserine" evidence="8">
    <location>
        <position position="98"/>
    </location>
</feature>
<feature type="modified residue" description="Phosphoserine" evidence="8">
    <location>
        <position position="202"/>
    </location>
</feature>
<feature type="modified residue" description="Phosphotyrosine" evidence="2">
    <location>
        <position position="204"/>
    </location>
</feature>
<feature type="modified residue" description="Phosphothreonine" evidence="8">
    <location>
        <position position="205"/>
    </location>
</feature>
<feature type="glycosylation site" description="O-linked (Xyl...) (chondroitin sulfate) serine" evidence="2">
    <location>
        <position position="15"/>
    </location>
</feature>
<reference key="1">
    <citation type="journal article" date="2004" name="Genome Res.">
        <title>The status, quality, and expansion of the NIH full-length cDNA project: the Mammalian Gene Collection (MGC).</title>
        <authorList>
            <consortium name="The MGC Project Team"/>
        </authorList>
    </citation>
    <scope>NUCLEOTIDE SEQUENCE [LARGE SCALE MRNA]</scope>
    <source>
        <tissue>Testis</tissue>
    </source>
</reference>
<reference key="2">
    <citation type="journal article" date="2012" name="Nat. Commun.">
        <title>Quantitative maps of protein phosphorylation sites across 14 different rat organs and tissues.</title>
        <authorList>
            <person name="Lundby A."/>
            <person name="Secher A."/>
            <person name="Lage K."/>
            <person name="Nordsborg N.B."/>
            <person name="Dmytriyev A."/>
            <person name="Lundby C."/>
            <person name="Olsen J.V."/>
        </authorList>
    </citation>
    <scope>PHOSPHORYLATION [LARGE SCALE ANALYSIS] AT SER-98; SER-202 AND THR-205</scope>
    <scope>IDENTIFICATION BY MASS SPECTROMETRY [LARGE SCALE ANALYSIS]</scope>
</reference>
<dbReference type="EMBL" id="BC083571">
    <property type="protein sequence ID" value="AAH83571.1"/>
    <property type="molecule type" value="mRNA"/>
</dbReference>
<dbReference type="RefSeq" id="NP_001008375.1">
    <property type="nucleotide sequence ID" value="NM_001008374.1"/>
</dbReference>
<dbReference type="SMR" id="Q5XIU9"/>
<dbReference type="BioGRID" id="263073">
    <property type="interactions" value="1"/>
</dbReference>
<dbReference type="FunCoup" id="Q5XIU9">
    <property type="interactions" value="3079"/>
</dbReference>
<dbReference type="IntAct" id="Q5XIU9">
    <property type="interactions" value="1"/>
</dbReference>
<dbReference type="STRING" id="10116.ENSRNOP00000018796"/>
<dbReference type="GlyGen" id="Q5XIU9">
    <property type="glycosylation" value="1 site"/>
</dbReference>
<dbReference type="iPTMnet" id="Q5XIU9"/>
<dbReference type="PhosphoSitePlus" id="Q5XIU9"/>
<dbReference type="jPOST" id="Q5XIU9"/>
<dbReference type="PaxDb" id="10116-ENSRNOP00000018796"/>
<dbReference type="Ensembl" id="ENSRNOT00000018796.5">
    <property type="protein sequence ID" value="ENSRNOP00000018796.4"/>
    <property type="gene ID" value="ENSRNOG00000014051.5"/>
</dbReference>
<dbReference type="GeneID" id="361940"/>
<dbReference type="KEGG" id="rno:361940"/>
<dbReference type="UCSC" id="RGD:1308804">
    <property type="organism name" value="rat"/>
</dbReference>
<dbReference type="AGR" id="RGD:1308804"/>
<dbReference type="CTD" id="10424"/>
<dbReference type="RGD" id="1308804">
    <property type="gene designation" value="Pgrmc2"/>
</dbReference>
<dbReference type="eggNOG" id="KOG1110">
    <property type="taxonomic scope" value="Eukaryota"/>
</dbReference>
<dbReference type="GeneTree" id="ENSGT00940000159744"/>
<dbReference type="HOGENOM" id="CLU_042860_1_0_1"/>
<dbReference type="InParanoid" id="Q5XIU9"/>
<dbReference type="OMA" id="QNTIEAD"/>
<dbReference type="OrthoDB" id="547796at2759"/>
<dbReference type="PhylomeDB" id="Q5XIU9"/>
<dbReference type="TreeFam" id="TF314562"/>
<dbReference type="Reactome" id="R-RNO-8980692">
    <property type="pathway name" value="RHOA GTPase cycle"/>
</dbReference>
<dbReference type="Reactome" id="R-RNO-9013404">
    <property type="pathway name" value="RAC2 GTPase cycle"/>
</dbReference>
<dbReference type="Reactome" id="R-RNO-9013405">
    <property type="pathway name" value="RHOD GTPase cycle"/>
</dbReference>
<dbReference type="Reactome" id="R-RNO-9013408">
    <property type="pathway name" value="RHOG GTPase cycle"/>
</dbReference>
<dbReference type="Reactome" id="R-RNO-9707616">
    <property type="pathway name" value="Heme signaling"/>
</dbReference>
<dbReference type="PRO" id="PR:Q5XIU9"/>
<dbReference type="Proteomes" id="UP000002494">
    <property type="component" value="Chromosome 2"/>
</dbReference>
<dbReference type="Bgee" id="ENSRNOG00000014051">
    <property type="expression patterns" value="Expressed in liver and 20 other cell types or tissues"/>
</dbReference>
<dbReference type="GO" id="GO:0012505">
    <property type="term" value="C:endomembrane system"/>
    <property type="evidence" value="ECO:0000318"/>
    <property type="project" value="GO_Central"/>
</dbReference>
<dbReference type="GO" id="GO:0005783">
    <property type="term" value="C:endoplasmic reticulum"/>
    <property type="evidence" value="ECO:0000250"/>
    <property type="project" value="UniProtKB"/>
</dbReference>
<dbReference type="GO" id="GO:0005576">
    <property type="term" value="C:extracellular region"/>
    <property type="evidence" value="ECO:0007669"/>
    <property type="project" value="UniProtKB-SubCell"/>
</dbReference>
<dbReference type="GO" id="GO:0098978">
    <property type="term" value="C:glutamatergic synapse"/>
    <property type="evidence" value="ECO:0000266"/>
    <property type="project" value="RGD"/>
</dbReference>
<dbReference type="GO" id="GO:0016020">
    <property type="term" value="C:membrane"/>
    <property type="evidence" value="ECO:0000318"/>
    <property type="project" value="GO_Central"/>
</dbReference>
<dbReference type="GO" id="GO:0005635">
    <property type="term" value="C:nuclear envelope"/>
    <property type="evidence" value="ECO:0000250"/>
    <property type="project" value="UniProtKB"/>
</dbReference>
<dbReference type="GO" id="GO:0045202">
    <property type="term" value="C:synapse"/>
    <property type="evidence" value="ECO:0000266"/>
    <property type="project" value="RGD"/>
</dbReference>
<dbReference type="GO" id="GO:0020037">
    <property type="term" value="F:heme binding"/>
    <property type="evidence" value="ECO:0000250"/>
    <property type="project" value="UniProtKB"/>
</dbReference>
<dbReference type="GO" id="GO:0015232">
    <property type="term" value="F:heme transmembrane transporter activity"/>
    <property type="evidence" value="ECO:0000266"/>
    <property type="project" value="RGD"/>
</dbReference>
<dbReference type="GO" id="GO:0005496">
    <property type="term" value="F:steroid binding"/>
    <property type="evidence" value="ECO:0007669"/>
    <property type="project" value="UniProtKB-KW"/>
</dbReference>
<dbReference type="GO" id="GO:0060612">
    <property type="term" value="P:adipose tissue development"/>
    <property type="evidence" value="ECO:0000250"/>
    <property type="project" value="UniProtKB"/>
</dbReference>
<dbReference type="GO" id="GO:0015886">
    <property type="term" value="P:heme transport"/>
    <property type="evidence" value="ECO:0000266"/>
    <property type="project" value="RGD"/>
</dbReference>
<dbReference type="FunFam" id="3.10.120.10:FF:000003">
    <property type="entry name" value="membrane-associated progesterone receptor component 1"/>
    <property type="match status" value="1"/>
</dbReference>
<dbReference type="Gene3D" id="3.10.120.10">
    <property type="entry name" value="Cytochrome b5-like heme/steroid binding domain"/>
    <property type="match status" value="1"/>
</dbReference>
<dbReference type="InterPro" id="IPR001199">
    <property type="entry name" value="Cyt_B5-like_heme/steroid-bd"/>
</dbReference>
<dbReference type="InterPro" id="IPR036400">
    <property type="entry name" value="Cyt_B5-like_heme/steroid_sf"/>
</dbReference>
<dbReference type="InterPro" id="IPR050577">
    <property type="entry name" value="MAPR/NEUFC/NENF-like"/>
</dbReference>
<dbReference type="PANTHER" id="PTHR10281:SF24">
    <property type="entry name" value="MEMBRANE-ASSOCIATED PROGESTERONE RECEPTOR COMPONENT 2"/>
    <property type="match status" value="1"/>
</dbReference>
<dbReference type="PANTHER" id="PTHR10281">
    <property type="entry name" value="MEMBRANE-ASSOCIATED PROGESTERONE RECEPTOR COMPONENT-RELATED"/>
    <property type="match status" value="1"/>
</dbReference>
<dbReference type="Pfam" id="PF00173">
    <property type="entry name" value="Cyt-b5"/>
    <property type="match status" value="1"/>
</dbReference>
<dbReference type="SMART" id="SM01117">
    <property type="entry name" value="Cyt-b5"/>
    <property type="match status" value="1"/>
</dbReference>
<dbReference type="SUPFAM" id="SSF55856">
    <property type="entry name" value="Cytochrome b5-like heme/steroid binding domain"/>
    <property type="match status" value="1"/>
</dbReference>
<protein>
    <recommendedName>
        <fullName evidence="6">Membrane-associated progesterone receptor component 2</fullName>
    </recommendedName>
</protein>
<keyword id="KW-0256">Endoplasmic reticulum</keyword>
<keyword id="KW-0325">Glycoprotein</keyword>
<keyword id="KW-0446">Lipid-binding</keyword>
<keyword id="KW-0472">Membrane</keyword>
<keyword id="KW-0539">Nucleus</keyword>
<keyword id="KW-0597">Phosphoprotein</keyword>
<keyword id="KW-0654">Proteoglycan</keyword>
<keyword id="KW-0675">Receptor</keyword>
<keyword id="KW-1185">Reference proteome</keyword>
<keyword id="KW-0964">Secreted</keyword>
<keyword id="KW-0754">Steroid-binding</keyword>
<keyword id="KW-0812">Transmembrane</keyword>
<keyword id="KW-1133">Transmembrane helix</keyword>
<organism>
    <name type="scientific">Rattus norvegicus</name>
    <name type="common">Rat</name>
    <dbReference type="NCBI Taxonomy" id="10116"/>
    <lineage>
        <taxon>Eukaryota</taxon>
        <taxon>Metazoa</taxon>
        <taxon>Chordata</taxon>
        <taxon>Craniata</taxon>
        <taxon>Vertebrata</taxon>
        <taxon>Euteleostomi</taxon>
        <taxon>Mammalia</taxon>
        <taxon>Eutheria</taxon>
        <taxon>Euarchontoglires</taxon>
        <taxon>Glires</taxon>
        <taxon>Rodentia</taxon>
        <taxon>Myomorpha</taxon>
        <taxon>Muroidea</taxon>
        <taxon>Muridae</taxon>
        <taxon>Murinae</taxon>
        <taxon>Rattus</taxon>
    </lineage>
</organism>
<name>PGRC2_RAT</name>
<evidence type="ECO:0000250" key="1"/>
<evidence type="ECO:0000250" key="2">
    <source>
        <dbReference type="UniProtKB" id="O15173"/>
    </source>
</evidence>
<evidence type="ECO:0000250" key="3">
    <source>
        <dbReference type="UniProtKB" id="Q80UU9"/>
    </source>
</evidence>
<evidence type="ECO:0000255" key="4"/>
<evidence type="ECO:0000256" key="5">
    <source>
        <dbReference type="SAM" id="MobiDB-lite"/>
    </source>
</evidence>
<evidence type="ECO:0000305" key="6"/>
<evidence type="ECO:0000312" key="7">
    <source>
        <dbReference type="RGD" id="1308804"/>
    </source>
</evidence>
<evidence type="ECO:0007744" key="8">
    <source>
    </source>
</evidence>
<sequence>MAAGDGDVKLSTLGSGGERGGDGSPGGAGATAARSSWVAALLATGGEMLLNVALVALVLLGAYRLWVRWGRRGLCSGPGAGEESPAATLPRMKKRDFSLEQLRQYDGARTPRILLAVNGKVFDVTKGSKFYGPAGPYGIFAGRDASRGLATFCLDKDALRDEYDDLSDLNAVQMESVREWEMQFKEKYDYVGRLLKPGEEPSEYTDEEDTKDHSKQD</sequence>